<organism>
    <name type="scientific">Alicyclobacillus acidocaldarius subsp. acidocaldarius</name>
    <name type="common">Bacillus acidocaldarius</name>
    <dbReference type="NCBI Taxonomy" id="1388"/>
    <lineage>
        <taxon>Bacteria</taxon>
        <taxon>Bacillati</taxon>
        <taxon>Bacillota</taxon>
        <taxon>Bacilli</taxon>
        <taxon>Bacillales</taxon>
        <taxon>Alicyclobacillaceae</taxon>
        <taxon>Alicyclobacillus</taxon>
    </lineage>
</organism>
<reference key="1">
    <citation type="journal article" date="1997" name="Biochem. J.">
        <title>Thioredoxin from Bacillus acidocaldarius: characterization, high-level expression in Escherichia coli and molecular modelling.</title>
        <authorList>
            <person name="Bartolucci S."/>
            <person name="Guagliardi A."/>
            <person name="Pedone E."/>
            <person name="de Pascale D."/>
            <person name="Cannio R."/>
            <person name="Camardella L."/>
            <person name="Rossi M."/>
            <person name="Nicastro G."/>
            <person name="de Chiara C."/>
            <person name="Facci P."/>
            <person name="Mascetti G."/>
            <person name="Nicolini C."/>
        </authorList>
    </citation>
    <scope>PROTEIN SEQUENCE</scope>
    <scope>CHARACTERIZATION</scope>
    <scope>DISULFIDE BOND</scope>
    <scope>MASS SPECTROMETRY</scope>
</reference>
<reference key="2">
    <citation type="journal article" date="2000" name="Eur. J. Biochem.">
        <title>NMR solution structure of a novel thioredoxin from bacillus acidocaldarius possible determinants of protein stability.</title>
        <authorList>
            <person name="Nicastro G."/>
            <person name="De Chiara C."/>
            <person name="Pedone E."/>
            <person name="Tato M."/>
            <person name="Rossi M."/>
            <person name="Bartolucci S."/>
        </authorList>
    </citation>
    <scope>STRUCTURE BY NMR</scope>
</reference>
<reference key="3">
    <citation type="journal article" date="2003" name="J. Bacteriol.">
        <title>An integrated structural and computational study of the thermostability of two thioredoxin mutants from Alicyclobacillus acidocaldarius.</title>
        <authorList>
            <person name="Bartolucci S."/>
            <person name="De Simone G."/>
            <person name="Galdiero S."/>
            <person name="Improta R."/>
            <person name="Menchise V."/>
            <person name="Pedone C."/>
            <person name="Pedone E."/>
            <person name="Saviano M."/>
        </authorList>
    </citation>
    <scope>X-RAY CRYSTALLOGRAPHY (1.9 ANGSTROMS)</scope>
</reference>
<comment type="function">
    <text>Participates in various redox reactions through the reversible oxidation of its active center dithiol to a disulfide and catalyzes dithiol-disulfide exchange reactions.</text>
</comment>
<comment type="mass spectrometry"/>
<comment type="similarity">
    <text evidence="3">Belongs to the thioredoxin family.</text>
</comment>
<feature type="chain" id="PRO_0000120072" description="Thioredoxin">
    <location>
        <begin position="1"/>
        <end position="105"/>
    </location>
</feature>
<feature type="domain" description="Thioredoxin" evidence="1">
    <location>
        <begin position="1"/>
        <end position="105"/>
    </location>
</feature>
<feature type="disulfide bond" description="Redox-active" evidence="1 2">
    <location>
        <begin position="29"/>
        <end position="32"/>
    </location>
</feature>
<feature type="strand" evidence="5">
    <location>
        <begin position="3"/>
        <end position="5"/>
    </location>
</feature>
<feature type="turn" evidence="4">
    <location>
        <begin position="7"/>
        <end position="9"/>
    </location>
</feature>
<feature type="helix" evidence="4">
    <location>
        <begin position="10"/>
        <end position="14"/>
    </location>
</feature>
<feature type="strand" evidence="4">
    <location>
        <begin position="15"/>
        <end position="18"/>
    </location>
</feature>
<feature type="strand" evidence="4">
    <location>
        <begin position="20"/>
        <end position="25"/>
    </location>
</feature>
<feature type="helix" evidence="4">
    <location>
        <begin position="30"/>
        <end position="45"/>
    </location>
</feature>
<feature type="turn" evidence="4">
    <location>
        <begin position="47"/>
        <end position="49"/>
    </location>
</feature>
<feature type="strand" evidence="4">
    <location>
        <begin position="51"/>
        <end position="56"/>
    </location>
</feature>
<feature type="turn" evidence="4">
    <location>
        <begin position="57"/>
        <end position="59"/>
    </location>
</feature>
<feature type="helix" evidence="4">
    <location>
        <begin position="61"/>
        <end position="66"/>
    </location>
</feature>
<feature type="strand" evidence="4">
    <location>
        <begin position="71"/>
        <end position="79"/>
    </location>
</feature>
<feature type="strand" evidence="4">
    <location>
        <begin position="82"/>
        <end position="89"/>
    </location>
</feature>
<feature type="helix" evidence="4">
    <location>
        <begin position="93"/>
        <end position="99"/>
    </location>
</feature>
<feature type="turn" evidence="4">
    <location>
        <begin position="100"/>
        <end position="104"/>
    </location>
</feature>
<keyword id="KW-0002">3D-structure</keyword>
<keyword id="KW-0903">Direct protein sequencing</keyword>
<keyword id="KW-1015">Disulfide bond</keyword>
<keyword id="KW-0249">Electron transport</keyword>
<keyword id="KW-0676">Redox-active center</keyword>
<keyword id="KW-0813">Transport</keyword>
<evidence type="ECO:0000255" key="1">
    <source>
        <dbReference type="PROSITE-ProRule" id="PRU00691"/>
    </source>
</evidence>
<evidence type="ECO:0000269" key="2">
    <source>
    </source>
</evidence>
<evidence type="ECO:0000305" key="3"/>
<evidence type="ECO:0007829" key="4">
    <source>
        <dbReference type="PDB" id="1NSW"/>
    </source>
</evidence>
<evidence type="ECO:0007829" key="5">
    <source>
        <dbReference type="PDB" id="1NW2"/>
    </source>
</evidence>
<sequence>ATMTLTDANFQQAIQGDKPVLVDFWAAWCGPCRMMAPVLEEFAEAHADKVTVAKLNVDENPETTSQFGIMSIPTLILFKGGRPVKQLIGYQPKEQLEAQLADVLQ</sequence>
<dbReference type="PDB" id="1NSW">
    <property type="method" value="X-ray"/>
    <property type="resolution" value="1.90 A"/>
    <property type="chains" value="A/B/C/D=1-105"/>
</dbReference>
<dbReference type="PDB" id="1NW2">
    <property type="method" value="X-ray"/>
    <property type="resolution" value="1.90 A"/>
    <property type="chains" value="A/B/C/D/E/F/G/H=1-105"/>
</dbReference>
<dbReference type="PDB" id="1QUW">
    <property type="method" value="NMR"/>
    <property type="chains" value="A=1-105"/>
</dbReference>
<dbReference type="PDB" id="1RQM">
    <property type="method" value="NMR"/>
    <property type="chains" value="A=1-105"/>
</dbReference>
<dbReference type="PDBsum" id="1NSW"/>
<dbReference type="PDBsum" id="1NW2"/>
<dbReference type="PDBsum" id="1QUW"/>
<dbReference type="PDBsum" id="1RQM"/>
<dbReference type="BMRB" id="P80579"/>
<dbReference type="SMR" id="P80579"/>
<dbReference type="EvolutionaryTrace" id="P80579"/>
<dbReference type="GO" id="GO:0005829">
    <property type="term" value="C:cytosol"/>
    <property type="evidence" value="ECO:0007669"/>
    <property type="project" value="TreeGrafter"/>
</dbReference>
<dbReference type="GO" id="GO:0015035">
    <property type="term" value="F:protein-disulfide reductase activity"/>
    <property type="evidence" value="ECO:0007669"/>
    <property type="project" value="InterPro"/>
</dbReference>
<dbReference type="GO" id="GO:0045454">
    <property type="term" value="P:cell redox homeostasis"/>
    <property type="evidence" value="ECO:0007669"/>
    <property type="project" value="TreeGrafter"/>
</dbReference>
<dbReference type="CDD" id="cd02947">
    <property type="entry name" value="TRX_family"/>
    <property type="match status" value="1"/>
</dbReference>
<dbReference type="FunFam" id="3.40.30.10:FF:000001">
    <property type="entry name" value="Thioredoxin"/>
    <property type="match status" value="1"/>
</dbReference>
<dbReference type="Gene3D" id="3.40.30.10">
    <property type="entry name" value="Glutaredoxin"/>
    <property type="match status" value="1"/>
</dbReference>
<dbReference type="InterPro" id="IPR005746">
    <property type="entry name" value="Thioredoxin"/>
</dbReference>
<dbReference type="InterPro" id="IPR036249">
    <property type="entry name" value="Thioredoxin-like_sf"/>
</dbReference>
<dbReference type="InterPro" id="IPR017937">
    <property type="entry name" value="Thioredoxin_CS"/>
</dbReference>
<dbReference type="InterPro" id="IPR013766">
    <property type="entry name" value="Thioredoxin_domain"/>
</dbReference>
<dbReference type="NCBIfam" id="TIGR01068">
    <property type="entry name" value="thioredoxin"/>
    <property type="match status" value="1"/>
</dbReference>
<dbReference type="PANTHER" id="PTHR45663">
    <property type="entry name" value="GEO12009P1"/>
    <property type="match status" value="1"/>
</dbReference>
<dbReference type="PANTHER" id="PTHR45663:SF11">
    <property type="entry name" value="GEO12009P1"/>
    <property type="match status" value="1"/>
</dbReference>
<dbReference type="Pfam" id="PF00085">
    <property type="entry name" value="Thioredoxin"/>
    <property type="match status" value="1"/>
</dbReference>
<dbReference type="PIRSF" id="PIRSF000077">
    <property type="entry name" value="Thioredoxin"/>
    <property type="match status" value="1"/>
</dbReference>
<dbReference type="PRINTS" id="PR00421">
    <property type="entry name" value="THIOREDOXIN"/>
</dbReference>
<dbReference type="SUPFAM" id="SSF52833">
    <property type="entry name" value="Thioredoxin-like"/>
    <property type="match status" value="1"/>
</dbReference>
<dbReference type="PROSITE" id="PS00194">
    <property type="entry name" value="THIOREDOXIN_1"/>
    <property type="match status" value="1"/>
</dbReference>
<dbReference type="PROSITE" id="PS51352">
    <property type="entry name" value="THIOREDOXIN_2"/>
    <property type="match status" value="1"/>
</dbReference>
<proteinExistence type="evidence at protein level"/>
<accession>P80579</accession>
<protein>
    <recommendedName>
        <fullName>Thioredoxin</fullName>
        <shortName>Trx</shortName>
    </recommendedName>
</protein>
<name>THIO_ALIAC</name>
<gene>
    <name type="primary">trxA</name>
</gene>